<reference key="1">
    <citation type="journal article" date="1978" name="Nature">
        <title>Rearrangement of genetic information may produce immunoglobulin diversity.</title>
        <authorList>
            <person name="Weigert M."/>
            <person name="Gatmaitan L."/>
            <person name="Loh E."/>
            <person name="Schilling J."/>
            <person name="Hood L.E."/>
        </authorList>
    </citation>
    <scope>PROTEIN SEQUENCE</scope>
</reference>
<accession>P01671</accession>
<proteinExistence type="evidence at protein level"/>
<name>KV3AJ_MOUSE</name>
<protein>
    <recommendedName>
        <fullName>Ig kappa chain V-III region PC 7175</fullName>
    </recommendedName>
</protein>
<keyword id="KW-1064">Adaptive immunity</keyword>
<keyword id="KW-0903">Direct protein sequencing</keyword>
<keyword id="KW-1015">Disulfide bond</keyword>
<keyword id="KW-0391">Immunity</keyword>
<keyword id="KW-1280">Immunoglobulin</keyword>
<keyword id="KW-1185">Reference proteome</keyword>
<organism>
    <name type="scientific">Mus musculus</name>
    <name type="common">Mouse</name>
    <dbReference type="NCBI Taxonomy" id="10090"/>
    <lineage>
        <taxon>Eukaryota</taxon>
        <taxon>Metazoa</taxon>
        <taxon>Chordata</taxon>
        <taxon>Craniata</taxon>
        <taxon>Vertebrata</taxon>
        <taxon>Euteleostomi</taxon>
        <taxon>Mammalia</taxon>
        <taxon>Eutheria</taxon>
        <taxon>Euarchontoglires</taxon>
        <taxon>Glires</taxon>
        <taxon>Rodentia</taxon>
        <taxon>Myomorpha</taxon>
        <taxon>Muroidea</taxon>
        <taxon>Muridae</taxon>
        <taxon>Murinae</taxon>
        <taxon>Mus</taxon>
        <taxon>Mus</taxon>
    </lineage>
</organism>
<evidence type="ECO:0000255" key="1">
    <source>
        <dbReference type="PROSITE-ProRule" id="PRU00114"/>
    </source>
</evidence>
<feature type="chain" id="PRO_0000059793" description="Ig kappa chain V-III region PC 7175">
    <location>
        <begin position="1"/>
        <end position="111" status="greater than"/>
    </location>
</feature>
<feature type="region of interest" description="Framework-1">
    <location>
        <begin position="1"/>
        <end position="23"/>
    </location>
</feature>
<feature type="region of interest" description="Complementarity-determining-1">
    <location>
        <begin position="24"/>
        <end position="38"/>
    </location>
</feature>
<feature type="region of interest" description="Framework-2">
    <location>
        <begin position="39"/>
        <end position="53"/>
    </location>
</feature>
<feature type="region of interest" description="Complementarity-determining-2">
    <location>
        <begin position="54"/>
        <end position="60"/>
    </location>
</feature>
<feature type="region of interest" description="Framework-3">
    <location>
        <begin position="61"/>
        <end position="92"/>
    </location>
</feature>
<feature type="region of interest" description="Complementarity-determining-3">
    <location>
        <begin position="93"/>
        <end position="101"/>
    </location>
</feature>
<feature type="region of interest" description="Framework-4">
    <location>
        <begin position="102"/>
        <end position="111"/>
    </location>
</feature>
<feature type="disulfide bond" evidence="1">
    <location>
        <begin position="23"/>
        <end position="92"/>
    </location>
</feature>
<feature type="non-terminal residue">
    <location>
        <position position="111"/>
    </location>
</feature>
<sequence length="111" mass="12010">DIVLTQSPASLAVSLGQRATISCRASKSVSTSGYSYMHWYQQKPGQPPKLLIYLASNLESGVPARFSGSGSGTDFTLNIHPVEEEDAATYYCQHSRELPLTFGAGTKLELK</sequence>
<dbReference type="PIR" id="B01938">
    <property type="entry name" value="KVMS75"/>
</dbReference>
<dbReference type="SMR" id="P01671"/>
<dbReference type="FunCoup" id="P01671">
    <property type="interactions" value="768"/>
</dbReference>
<dbReference type="jPOST" id="P01671"/>
<dbReference type="InParanoid" id="P01671"/>
<dbReference type="Proteomes" id="UP000000589">
    <property type="component" value="Unplaced"/>
</dbReference>
<dbReference type="RNAct" id="P01671">
    <property type="molecule type" value="protein"/>
</dbReference>
<dbReference type="GO" id="GO:0019814">
    <property type="term" value="C:immunoglobulin complex"/>
    <property type="evidence" value="ECO:0000318"/>
    <property type="project" value="GO_Central"/>
</dbReference>
<dbReference type="GO" id="GO:0002250">
    <property type="term" value="P:adaptive immune response"/>
    <property type="evidence" value="ECO:0007669"/>
    <property type="project" value="UniProtKB-KW"/>
</dbReference>
<dbReference type="GO" id="GO:0006955">
    <property type="term" value="P:immune response"/>
    <property type="evidence" value="ECO:0000318"/>
    <property type="project" value="GO_Central"/>
</dbReference>
<dbReference type="CDD" id="cd04980">
    <property type="entry name" value="IgV_L_kappa"/>
    <property type="match status" value="1"/>
</dbReference>
<dbReference type="FunFam" id="2.60.40.10:FF:000350">
    <property type="entry name" value="Immunoglobulin kappa chain variable 18-36"/>
    <property type="match status" value="1"/>
</dbReference>
<dbReference type="Gene3D" id="2.60.40.10">
    <property type="entry name" value="Immunoglobulins"/>
    <property type="match status" value="1"/>
</dbReference>
<dbReference type="InterPro" id="IPR007110">
    <property type="entry name" value="Ig-like_dom"/>
</dbReference>
<dbReference type="InterPro" id="IPR036179">
    <property type="entry name" value="Ig-like_dom_sf"/>
</dbReference>
<dbReference type="InterPro" id="IPR013783">
    <property type="entry name" value="Ig-like_fold"/>
</dbReference>
<dbReference type="InterPro" id="IPR003599">
    <property type="entry name" value="Ig_sub"/>
</dbReference>
<dbReference type="InterPro" id="IPR013106">
    <property type="entry name" value="Ig_V-set"/>
</dbReference>
<dbReference type="InterPro" id="IPR050150">
    <property type="entry name" value="IgV_Light_Chain"/>
</dbReference>
<dbReference type="PANTHER" id="PTHR23267">
    <property type="entry name" value="IMMUNOGLOBULIN LIGHT CHAIN"/>
    <property type="match status" value="1"/>
</dbReference>
<dbReference type="Pfam" id="PF07686">
    <property type="entry name" value="V-set"/>
    <property type="match status" value="1"/>
</dbReference>
<dbReference type="SMART" id="SM00409">
    <property type="entry name" value="IG"/>
    <property type="match status" value="1"/>
</dbReference>
<dbReference type="SMART" id="SM00406">
    <property type="entry name" value="IGv"/>
    <property type="match status" value="1"/>
</dbReference>
<dbReference type="SUPFAM" id="SSF48726">
    <property type="entry name" value="Immunoglobulin"/>
    <property type="match status" value="1"/>
</dbReference>
<dbReference type="PROSITE" id="PS50835">
    <property type="entry name" value="IG_LIKE"/>
    <property type="match status" value="1"/>
</dbReference>